<accession>A7MJR9</accession>
<sequence length="187" mass="20788">MNLQHHFLIAMPALQDPLFRRSVVYICEYNNEGAMGLIINKPLENLQVEGVLQKLKITPEPRDPAIRLDKPVFLGGPLAEDRGFILHTPPDAFSSSIRISDNTVITTSRDVLETLGTAEQPDDVLVALGYSSWEKGQLEEEILENAWLTAPADLNILFRTPIADRWREAAKLIGIDIHTMPGEAGHA</sequence>
<feature type="chain" id="PRO_1000046654" description="UPF0301 protein ESA_00394">
    <location>
        <begin position="1"/>
        <end position="187"/>
    </location>
</feature>
<name>Y394_CROS8</name>
<organism>
    <name type="scientific">Cronobacter sakazakii (strain ATCC BAA-894)</name>
    <name type="common">Enterobacter sakazakii</name>
    <dbReference type="NCBI Taxonomy" id="290339"/>
    <lineage>
        <taxon>Bacteria</taxon>
        <taxon>Pseudomonadati</taxon>
        <taxon>Pseudomonadota</taxon>
        <taxon>Gammaproteobacteria</taxon>
        <taxon>Enterobacterales</taxon>
        <taxon>Enterobacteriaceae</taxon>
        <taxon>Cronobacter</taxon>
    </lineage>
</organism>
<protein>
    <recommendedName>
        <fullName evidence="1">UPF0301 protein ESA_00394</fullName>
    </recommendedName>
</protein>
<gene>
    <name type="ordered locus">ESA_00394</name>
</gene>
<keyword id="KW-1185">Reference proteome</keyword>
<comment type="similarity">
    <text evidence="1">Belongs to the UPF0301 (AlgH) family.</text>
</comment>
<dbReference type="EMBL" id="CP000783">
    <property type="protein sequence ID" value="ABU75692.1"/>
    <property type="molecule type" value="Genomic_DNA"/>
</dbReference>
<dbReference type="RefSeq" id="WP_004385631.1">
    <property type="nucleotide sequence ID" value="NC_009778.1"/>
</dbReference>
<dbReference type="SMR" id="A7MJR9"/>
<dbReference type="KEGG" id="esa:ESA_00394"/>
<dbReference type="HOGENOM" id="CLU_057596_1_0_6"/>
<dbReference type="Proteomes" id="UP000000260">
    <property type="component" value="Chromosome"/>
</dbReference>
<dbReference type="GO" id="GO:0005829">
    <property type="term" value="C:cytosol"/>
    <property type="evidence" value="ECO:0007669"/>
    <property type="project" value="TreeGrafter"/>
</dbReference>
<dbReference type="Gene3D" id="3.40.1740.10">
    <property type="entry name" value="VC0467-like"/>
    <property type="match status" value="1"/>
</dbReference>
<dbReference type="HAMAP" id="MF_00758">
    <property type="entry name" value="UPF0301"/>
    <property type="match status" value="1"/>
</dbReference>
<dbReference type="InterPro" id="IPR003774">
    <property type="entry name" value="AlgH-like"/>
</dbReference>
<dbReference type="NCBIfam" id="NF001266">
    <property type="entry name" value="PRK00228.1-1"/>
    <property type="match status" value="1"/>
</dbReference>
<dbReference type="PANTHER" id="PTHR30327">
    <property type="entry name" value="UNCHARACTERIZED PROTEIN YQGE"/>
    <property type="match status" value="1"/>
</dbReference>
<dbReference type="PANTHER" id="PTHR30327:SF1">
    <property type="entry name" value="UPF0301 PROTEIN YQGE"/>
    <property type="match status" value="1"/>
</dbReference>
<dbReference type="Pfam" id="PF02622">
    <property type="entry name" value="DUF179"/>
    <property type="match status" value="1"/>
</dbReference>
<dbReference type="SUPFAM" id="SSF143456">
    <property type="entry name" value="VC0467-like"/>
    <property type="match status" value="1"/>
</dbReference>
<evidence type="ECO:0000255" key="1">
    <source>
        <dbReference type="HAMAP-Rule" id="MF_00758"/>
    </source>
</evidence>
<proteinExistence type="inferred from homology"/>
<reference key="1">
    <citation type="journal article" date="2010" name="PLoS ONE">
        <title>Genome sequence of Cronobacter sakazakii BAA-894 and comparative genomic hybridization analysis with other Cronobacter species.</title>
        <authorList>
            <person name="Kucerova E."/>
            <person name="Clifton S.W."/>
            <person name="Xia X.Q."/>
            <person name="Long F."/>
            <person name="Porwollik S."/>
            <person name="Fulton L."/>
            <person name="Fronick C."/>
            <person name="Minx P."/>
            <person name="Kyung K."/>
            <person name="Warren W."/>
            <person name="Fulton R."/>
            <person name="Feng D."/>
            <person name="Wollam A."/>
            <person name="Shah N."/>
            <person name="Bhonagiri V."/>
            <person name="Nash W.E."/>
            <person name="Hallsworth-Pepin K."/>
            <person name="Wilson R.K."/>
            <person name="McClelland M."/>
            <person name="Forsythe S.J."/>
        </authorList>
    </citation>
    <scope>NUCLEOTIDE SEQUENCE [LARGE SCALE GENOMIC DNA]</scope>
    <source>
        <strain>ATCC BAA-894</strain>
    </source>
</reference>